<keyword id="KW-1003">Cell membrane</keyword>
<keyword id="KW-0217">Developmental protein</keyword>
<keyword id="KW-0472">Membrane</keyword>
<keyword id="KW-1185">Reference proteome</keyword>
<keyword id="KW-0677">Repeat</keyword>
<keyword id="KW-0762">Sugar transport</keyword>
<keyword id="KW-0812">Transmembrane</keyword>
<keyword id="KW-1133">Transmembrane helix</keyword>
<keyword id="KW-0813">Transport</keyword>
<accession>O82587</accession>
<proteinExistence type="evidence at protein level"/>
<protein>
    <recommendedName>
        <fullName evidence="7">Bidirectional sugar transporter SWEET12</fullName>
        <shortName evidence="7">AtSWEET12</shortName>
    </recommendedName>
    <alternativeName>
        <fullName evidence="9">MtN3-like protein</fullName>
    </alternativeName>
    <alternativeName>
        <fullName evidence="7">Protein SUGARS WILL EVENTUALLY BE EXPORTED TRANSPORTERS 12</fullName>
    </alternativeName>
</protein>
<feature type="chain" id="PRO_0000404112" description="Bidirectional sugar transporter SWEET12">
    <location>
        <begin position="1"/>
        <end position="285"/>
    </location>
</feature>
<feature type="topological domain" description="Extracellular" evidence="2">
    <location>
        <begin position="1"/>
        <end position="9"/>
    </location>
</feature>
<feature type="transmembrane region" description="Helical; Name=1" evidence="2">
    <location>
        <begin position="10"/>
        <end position="30"/>
    </location>
</feature>
<feature type="topological domain" description="Cytoplasmic" evidence="2">
    <location>
        <begin position="31"/>
        <end position="43"/>
    </location>
</feature>
<feature type="transmembrane region" description="Helical; Name=2" evidence="2">
    <location>
        <begin position="44"/>
        <end position="64"/>
    </location>
</feature>
<feature type="topological domain" description="Extracellular" evidence="2">
    <location>
        <begin position="65"/>
        <end position="70"/>
    </location>
</feature>
<feature type="transmembrane region" description="Helical; Name=3" evidence="2">
    <location>
        <begin position="71"/>
        <end position="91"/>
    </location>
</feature>
<feature type="topological domain" description="Cytoplasmic" evidence="2">
    <location>
        <begin position="92"/>
        <end position="105"/>
    </location>
</feature>
<feature type="transmembrane region" description="Helical; Name=4" evidence="2">
    <location>
        <begin position="106"/>
        <end position="126"/>
    </location>
</feature>
<feature type="topological domain" description="Extracellular" evidence="2">
    <location>
        <begin position="127"/>
        <end position="133"/>
    </location>
</feature>
<feature type="transmembrane region" description="Helical; Name=5" evidence="2">
    <location>
        <begin position="134"/>
        <end position="154"/>
    </location>
</feature>
<feature type="topological domain" description="Cytoplasmic" evidence="2">
    <location>
        <begin position="155"/>
        <end position="167"/>
    </location>
</feature>
<feature type="transmembrane region" description="Helical; Name=6" evidence="2">
    <location>
        <begin position="168"/>
        <end position="188"/>
    </location>
</feature>
<feature type="topological domain" description="Extracellular" evidence="2">
    <location>
        <begin position="189"/>
        <end position="192"/>
    </location>
</feature>
<feature type="transmembrane region" description="Helical; Name=7" evidence="2">
    <location>
        <begin position="193"/>
        <end position="213"/>
    </location>
</feature>
<feature type="topological domain" description="Cytoplasmic" evidence="2">
    <location>
        <begin position="214"/>
        <end position="285"/>
    </location>
</feature>
<feature type="domain" description="MtN3/slv 1">
    <location>
        <begin position="12"/>
        <end position="98"/>
    </location>
</feature>
<feature type="domain" description="MtN3/slv 2">
    <location>
        <begin position="134"/>
        <end position="218"/>
    </location>
</feature>
<reference key="1">
    <citation type="submission" date="1998-09" db="EMBL/GenBank/DDBJ databases">
        <title>An Arabidopsis cDNA clone encoding a protein homologous to Medicago truncatula MTN3.</title>
        <authorList>
            <person name="Cheong J.-J."/>
        </authorList>
    </citation>
    <scope>NUCLEOTIDE SEQUENCE [MRNA]</scope>
</reference>
<reference key="2">
    <citation type="journal article" date="2000" name="DNA Res.">
        <title>Structural analysis of Arabidopsis thaliana chromosome 5. X. Sequence features of the regions of 3,076,755 bp covered by sixty P1 and TAC clones.</title>
        <authorList>
            <person name="Sato S."/>
            <person name="Nakamura Y."/>
            <person name="Kaneko T."/>
            <person name="Katoh T."/>
            <person name="Asamizu E."/>
            <person name="Kotani H."/>
            <person name="Tabata S."/>
        </authorList>
    </citation>
    <scope>NUCLEOTIDE SEQUENCE [LARGE SCALE GENOMIC DNA]</scope>
    <source>
        <strain>cv. Columbia</strain>
    </source>
</reference>
<reference key="3">
    <citation type="journal article" date="2017" name="Plant J.">
        <title>Araport11: a complete reannotation of the Arabidopsis thaliana reference genome.</title>
        <authorList>
            <person name="Cheng C.Y."/>
            <person name="Krishnakumar V."/>
            <person name="Chan A.P."/>
            <person name="Thibaud-Nissen F."/>
            <person name="Schobel S."/>
            <person name="Town C.D."/>
        </authorList>
    </citation>
    <scope>GENOME REANNOTATION</scope>
    <source>
        <strain>cv. Columbia</strain>
    </source>
</reference>
<reference key="4">
    <citation type="journal article" date="2003" name="Science">
        <title>Empirical analysis of transcriptional activity in the Arabidopsis genome.</title>
        <authorList>
            <person name="Yamada K."/>
            <person name="Lim J."/>
            <person name="Dale J.M."/>
            <person name="Chen H."/>
            <person name="Shinn P."/>
            <person name="Palm C.J."/>
            <person name="Southwick A.M."/>
            <person name="Wu H.C."/>
            <person name="Kim C.J."/>
            <person name="Nguyen M."/>
            <person name="Pham P.K."/>
            <person name="Cheuk R.F."/>
            <person name="Karlin-Newmann G."/>
            <person name="Liu S.X."/>
            <person name="Lam B."/>
            <person name="Sakano H."/>
            <person name="Wu T."/>
            <person name="Yu G."/>
            <person name="Miranda M."/>
            <person name="Quach H.L."/>
            <person name="Tripp M."/>
            <person name="Chang C.H."/>
            <person name="Lee J.M."/>
            <person name="Toriumi M.J."/>
            <person name="Chan M.M."/>
            <person name="Tang C.C."/>
            <person name="Onodera C.S."/>
            <person name="Deng J.M."/>
            <person name="Akiyama K."/>
            <person name="Ansari Y."/>
            <person name="Arakawa T."/>
            <person name="Banh J."/>
            <person name="Banno F."/>
            <person name="Bowser L."/>
            <person name="Brooks S.Y."/>
            <person name="Carninci P."/>
            <person name="Chao Q."/>
            <person name="Choy N."/>
            <person name="Enju A."/>
            <person name="Goldsmith A.D."/>
            <person name="Gurjal M."/>
            <person name="Hansen N.F."/>
            <person name="Hayashizaki Y."/>
            <person name="Johnson-Hopson C."/>
            <person name="Hsuan V.W."/>
            <person name="Iida K."/>
            <person name="Karnes M."/>
            <person name="Khan S."/>
            <person name="Koesema E."/>
            <person name="Ishida J."/>
            <person name="Jiang P.X."/>
            <person name="Jones T."/>
            <person name="Kawai J."/>
            <person name="Kamiya A."/>
            <person name="Meyers C."/>
            <person name="Nakajima M."/>
            <person name="Narusaka M."/>
            <person name="Seki M."/>
            <person name="Sakurai T."/>
            <person name="Satou M."/>
            <person name="Tamse R."/>
            <person name="Vaysberg M."/>
            <person name="Wallender E.K."/>
            <person name="Wong C."/>
            <person name="Yamamura Y."/>
            <person name="Yuan S."/>
            <person name="Shinozaki K."/>
            <person name="Davis R.W."/>
            <person name="Theologis A."/>
            <person name="Ecker J.R."/>
        </authorList>
    </citation>
    <scope>NUCLEOTIDE SEQUENCE [LARGE SCALE MRNA]</scope>
    <source>
        <strain>cv. Columbia</strain>
    </source>
</reference>
<reference key="5">
    <citation type="journal article" date="2009" name="Plant Physiol.">
        <title>Large-scale Arabidopsis phosphoproteome profiling reveals novel chloroplast kinase substrates and phosphorylation networks.</title>
        <authorList>
            <person name="Reiland S."/>
            <person name="Messerli G."/>
            <person name="Baerenfaller K."/>
            <person name="Gerrits B."/>
            <person name="Endler A."/>
            <person name="Grossmann J."/>
            <person name="Gruissem W."/>
            <person name="Baginsky S."/>
        </authorList>
    </citation>
    <scope>IDENTIFICATION BY MASS SPECTROMETRY [LARGE SCALE ANALYSIS]</scope>
</reference>
<reference key="6">
    <citation type="journal article" date="2010" name="Nature">
        <title>Sugar transporters for intercellular exchange and nutrition of pathogens.</title>
        <authorList>
            <person name="Chen L.-Q."/>
            <person name="Hou B.-H."/>
            <person name="Lalonde S."/>
            <person name="Takanaga H."/>
            <person name="Hartung M.L."/>
            <person name="Qu X.-Q."/>
            <person name="Guo W.-J."/>
            <person name="Kim J.-G."/>
            <person name="Underwood W."/>
            <person name="Chaudhuri B."/>
            <person name="Chermak D."/>
            <person name="Antony G."/>
            <person name="White F.F."/>
            <person name="Somerville S.C."/>
            <person name="Mudgett M.B."/>
            <person name="Frommer W.B."/>
        </authorList>
    </citation>
    <scope>INDUCTION BY PATHOGENS</scope>
    <scope>GENE FAMILY</scope>
    <scope>NOMENCLATURE</scope>
    <source>
        <strain>cv. Columbia</strain>
    </source>
</reference>
<reference key="7">
    <citation type="journal article" date="2012" name="Mol. Plant">
        <title>SWEET as sugar: new sucrose effluxers in plants.</title>
        <authorList>
            <person name="Baker R.F."/>
            <person name="Leach K.A."/>
            <person name="Braun D.M."/>
        </authorList>
    </citation>
    <scope>REVIEW</scope>
</reference>
<reference key="8">
    <citation type="journal article" date="2012" name="Science">
        <title>Sucrose efflux mediated by SWEET proteins as a key step for phloem transport.</title>
        <authorList>
            <person name="Chen L.-Q."/>
            <person name="Qu X.-Q."/>
            <person name="Hou B.-H."/>
            <person name="Sosso D."/>
            <person name="Osorio S."/>
            <person name="Fernie A.R."/>
            <person name="Frommer W.B."/>
        </authorList>
    </citation>
    <scope>FUNCTION</scope>
    <scope>DISRUPTION PHENOTYPE</scope>
    <scope>SUBCELLULAR LOCATION</scope>
    <scope>TISSUE SPECIFICITY</scope>
    <scope>BIOPHYSICOCHEMICAL PROPERTIES</scope>
    <source>
        <strain>cv. Columbia</strain>
    </source>
</reference>
<reference key="9">
    <citation type="journal article" date="2013" name="Proc. Natl. Acad. Sci. U.S.A.">
        <title>Functional role of oligomerization for bacterial and plant SWEET sugar transporter family.</title>
        <authorList>
            <person name="Xuan Y.H."/>
            <person name="Hu Y.B."/>
            <person name="Chen L.-Q."/>
            <person name="Sosso D."/>
            <person name="Ducat D.C."/>
            <person name="Hou B.-H."/>
            <person name="Frommer W.B."/>
        </authorList>
    </citation>
    <scope>SUBUNIT</scope>
    <scope>INTERACTION WITH SWEET5; SWEET11 AND SWEET17</scope>
</reference>
<reference key="10">
    <citation type="journal article" date="2015" name="Curr. Opin. Plant Biol.">
        <title>SWEETs, transporters for intracellular and intercellular sugar translocation.</title>
        <authorList>
            <person name="Eom J.-S."/>
            <person name="Chen L.-Q."/>
            <person name="Sosso D."/>
            <person name="Julius B.T."/>
            <person name="Lin I.W."/>
            <person name="Qu X.-Q."/>
            <person name="Braun D.M."/>
            <person name="Frommer W.B."/>
        </authorList>
    </citation>
    <scope>REVIEW</scope>
    <source>
        <strain>cv. Columbia</strain>
    </source>
</reference>
<reference key="11">
    <citation type="journal article" date="2015" name="Plant Cell">
        <title>A cascade of sequentially expressed sucrose transporters in the seed coat and endosperm provides nutrition for the Arabidopsis embryo.</title>
        <authorList>
            <person name="Chen L.Q."/>
            <person name="Lin I.W."/>
            <person name="Qu X.Q."/>
            <person name="Sosso D."/>
            <person name="McFarlane H.E."/>
            <person name="Londono A."/>
            <person name="Samuels A.L."/>
            <person name="Frommer W.B."/>
        </authorList>
    </citation>
    <scope>FUNCTION</scope>
    <scope>DISRUPTION PHENOTYPE</scope>
    <scope>DEVELOPMENTAL STAGE</scope>
    <scope>TISSUE SPECIFICITY</scope>
    <source>
        <strain>cv. Columbia</strain>
    </source>
</reference>
<gene>
    <name evidence="7" type="primary">SWEET12</name>
    <name evidence="9" type="synonym">MTN3</name>
    <name type="ordered locus">At5g23660</name>
    <name type="ORF">MQM1.8</name>
</gene>
<name>SWT12_ARATH</name>
<dbReference type="EMBL" id="AF095641">
    <property type="protein sequence ID" value="AAC64192.1"/>
    <property type="molecule type" value="mRNA"/>
</dbReference>
<dbReference type="EMBL" id="AB025633">
    <property type="protein sequence ID" value="BAA97235.1"/>
    <property type="molecule type" value="Genomic_DNA"/>
</dbReference>
<dbReference type="EMBL" id="CP002688">
    <property type="protein sequence ID" value="AED93195.1"/>
    <property type="molecule type" value="Genomic_DNA"/>
</dbReference>
<dbReference type="EMBL" id="AY057575">
    <property type="protein sequence ID" value="AAL09814.1"/>
    <property type="molecule type" value="mRNA"/>
</dbReference>
<dbReference type="EMBL" id="AY059108">
    <property type="protein sequence ID" value="AAL15214.1"/>
    <property type="molecule type" value="mRNA"/>
</dbReference>
<dbReference type="EMBL" id="AY116672">
    <property type="protein sequence ID" value="AAM47150.1"/>
    <property type="molecule type" value="mRNA"/>
</dbReference>
<dbReference type="PIR" id="T51837">
    <property type="entry name" value="T51837"/>
</dbReference>
<dbReference type="RefSeq" id="NP_197755.1">
    <property type="nucleotide sequence ID" value="NM_122271.3"/>
</dbReference>
<dbReference type="SMR" id="O82587"/>
<dbReference type="BioGRID" id="17706">
    <property type="interactions" value="5"/>
</dbReference>
<dbReference type="FunCoup" id="O82587">
    <property type="interactions" value="1216"/>
</dbReference>
<dbReference type="IntAct" id="O82587">
    <property type="interactions" value="2"/>
</dbReference>
<dbReference type="STRING" id="3702.O82587"/>
<dbReference type="iPTMnet" id="O82587"/>
<dbReference type="PaxDb" id="3702-AT5G23660.1"/>
<dbReference type="ProteomicsDB" id="226558"/>
<dbReference type="EnsemblPlants" id="AT5G23660.1">
    <property type="protein sequence ID" value="AT5G23660.1"/>
    <property type="gene ID" value="AT5G23660"/>
</dbReference>
<dbReference type="GeneID" id="832431"/>
<dbReference type="Gramene" id="AT5G23660.1">
    <property type="protein sequence ID" value="AT5G23660.1"/>
    <property type="gene ID" value="AT5G23660"/>
</dbReference>
<dbReference type="KEGG" id="ath:AT5G23660"/>
<dbReference type="Araport" id="AT5G23660"/>
<dbReference type="TAIR" id="AT5G23660">
    <property type="gene designation" value="SWEET12"/>
</dbReference>
<dbReference type="eggNOG" id="KOG1623">
    <property type="taxonomic scope" value="Eukaryota"/>
</dbReference>
<dbReference type="HOGENOM" id="CLU_048643_4_0_1"/>
<dbReference type="InParanoid" id="O82587"/>
<dbReference type="OMA" id="VANCVAW"/>
<dbReference type="PhylomeDB" id="O82587"/>
<dbReference type="SABIO-RK" id="O82587"/>
<dbReference type="PRO" id="PR:O82587"/>
<dbReference type="Proteomes" id="UP000006548">
    <property type="component" value="Chromosome 5"/>
</dbReference>
<dbReference type="ExpressionAtlas" id="O82587">
    <property type="expression patterns" value="baseline and differential"/>
</dbReference>
<dbReference type="GO" id="GO:0005886">
    <property type="term" value="C:plasma membrane"/>
    <property type="evidence" value="ECO:0000314"/>
    <property type="project" value="TAIR"/>
</dbReference>
<dbReference type="GO" id="GO:0008515">
    <property type="term" value="F:sucrose transmembrane transporter activity"/>
    <property type="evidence" value="ECO:0000314"/>
    <property type="project" value="TAIR"/>
</dbReference>
<dbReference type="GO" id="GO:0051119">
    <property type="term" value="F:sugar transmembrane transporter activity"/>
    <property type="evidence" value="ECO:0000250"/>
    <property type="project" value="UniProtKB"/>
</dbReference>
<dbReference type="GO" id="GO:0009793">
    <property type="term" value="P:embryo development ending in seed dormancy"/>
    <property type="evidence" value="ECO:0000315"/>
    <property type="project" value="UniProtKB"/>
</dbReference>
<dbReference type="GO" id="GO:0051260">
    <property type="term" value="P:protein homooligomerization"/>
    <property type="evidence" value="ECO:0000314"/>
    <property type="project" value="UniProtKB"/>
</dbReference>
<dbReference type="GO" id="GO:0010431">
    <property type="term" value="P:seed maturation"/>
    <property type="evidence" value="ECO:0000315"/>
    <property type="project" value="UniProtKB"/>
</dbReference>
<dbReference type="GO" id="GO:0015770">
    <property type="term" value="P:sucrose transport"/>
    <property type="evidence" value="ECO:0000314"/>
    <property type="project" value="TAIR"/>
</dbReference>
<dbReference type="FunFam" id="1.20.1280.290:FF:000001">
    <property type="entry name" value="Bidirectional sugar transporter SWEET"/>
    <property type="match status" value="1"/>
</dbReference>
<dbReference type="FunFam" id="1.20.1280.290:FF:000003">
    <property type="entry name" value="Bidirectional sugar transporter SWEET"/>
    <property type="match status" value="1"/>
</dbReference>
<dbReference type="Gene3D" id="1.20.1280.290">
    <property type="match status" value="2"/>
</dbReference>
<dbReference type="InterPro" id="IPR047664">
    <property type="entry name" value="SWEET"/>
</dbReference>
<dbReference type="InterPro" id="IPR004316">
    <property type="entry name" value="SWEET_rpt"/>
</dbReference>
<dbReference type="PANTHER" id="PTHR10791:SF244">
    <property type="entry name" value="BIDIRECTIONAL SUGAR TRANSPORTER SWEET12"/>
    <property type="match status" value="1"/>
</dbReference>
<dbReference type="PANTHER" id="PTHR10791">
    <property type="entry name" value="RAG1-ACTIVATING PROTEIN 1"/>
    <property type="match status" value="1"/>
</dbReference>
<dbReference type="Pfam" id="PF03083">
    <property type="entry name" value="MtN3_slv"/>
    <property type="match status" value="2"/>
</dbReference>
<sequence>MALFDTHNTWAFVFGLLGNLISFAVFLSPVPTFYRICKKKTTEGFQSIPYVVALFSAMLWLYYATQKKDVFLLVTINSFGCFIETIYISIFVAFASKKARMLTVKLLLLMNFGGFCLILLLCQFLAKGTTRAKIIGGICVGFSVCVFAAPLSIIRTVIKTKSVEYMPFSLSLTLTISAVIWLLYGLALKDIYVAFPNVIGFVLGALQMILYVVYKYCKTPSDLVEKELEAAKLPEVSIDMVKLGTLTSPEPVAITVVRSVNTCNCNDRNAEIENGQGVRNSAATT</sequence>
<organism>
    <name type="scientific">Arabidopsis thaliana</name>
    <name type="common">Mouse-ear cress</name>
    <dbReference type="NCBI Taxonomy" id="3702"/>
    <lineage>
        <taxon>Eukaryota</taxon>
        <taxon>Viridiplantae</taxon>
        <taxon>Streptophyta</taxon>
        <taxon>Embryophyta</taxon>
        <taxon>Tracheophyta</taxon>
        <taxon>Spermatophyta</taxon>
        <taxon>Magnoliopsida</taxon>
        <taxon>eudicotyledons</taxon>
        <taxon>Gunneridae</taxon>
        <taxon>Pentapetalae</taxon>
        <taxon>rosids</taxon>
        <taxon>malvids</taxon>
        <taxon>Brassicales</taxon>
        <taxon>Brassicaceae</taxon>
        <taxon>Camelineae</taxon>
        <taxon>Arabidopsis</taxon>
    </lineage>
</organism>
<comment type="function">
    <text evidence="4 6 8">Mediates both low-affinity uptake and efflux of sugar across the plasma membrane. Involved in phloem loading by mediating export from parenchyma cells feeding H(+)-coupled import into the sieve element/companion cell complex, thus contributing to the sucrose migration from sites of synthesis in the mesophyll to the phloem (PubMed:22157085, PubMed:25988582). Contributes to seed filling by triggering sucrose efflux involved in the transfer of sugars from seed coat to embryos (PubMed:25988582).</text>
</comment>
<comment type="biophysicochemical properties">
    <kinetics>
        <KM evidence="4">70 mM for sucrose uptake</KM>
        <KM evidence="4">10 mM for sucrose efflux</KM>
    </kinetics>
</comment>
<comment type="subunit">
    <text evidence="5">Forms homooligomers and heterooligomers with SWEET5, SWEET11 and SWEET17.</text>
</comment>
<comment type="subcellular location">
    <subcellularLocation>
        <location evidence="4">Cell membrane</location>
        <topology evidence="1">Multi-pass membrane protein</topology>
    </subcellularLocation>
    <text evidence="4">Present in the plasma membrane of the phloem.</text>
</comment>
<comment type="tissue specificity">
    <text evidence="4 6">Expressed in leaves, especially in phloem (PubMed:22157085). Expressed in developing seeds (PubMed:25794936).</text>
</comment>
<comment type="developmental stage">
    <text evidence="6">In developing seeds, accumulates specifically at different stages. At globular stage, present in micropylar end of seed coat, in the endosperm and in the embryo suspensor. At the heart stage, confined to the micropylar end of seed coat. From the linear mature cotyledon stage until mature seed, present in the micropylar end of seed coat as well as in the endosperm.</text>
</comment>
<comment type="induction">
    <text evidence="3">Induced by the powdery mildew fungus G.cichoracearum and the pathogenic bacteria P.syringae pv. tomato.</text>
</comment>
<comment type="disruption phenotype">
    <text evidence="4 6">Under high-light conditions, plants lacking both SWEET11 and SWEET12 are defective in phloem loading and display slower growth, mild chlorosis, and high levels of starch and sugar accumulation in leaves (PubMed:22157085). In plants lacking SWEET11, SWEET12 and SWEET15, severe seed defects, which include retarded embryo development, reduced seed weight, and reduced starch and lipid content, causing a wrinkled seed phenotype. Altered sucrose efflux involved in the transfer of sugars from seed coat to embryos thus leading to starch accumulation in the seed coat but not in the embryo (PubMed:25794936).</text>
</comment>
<comment type="similarity">
    <text evidence="10">Belongs to the SWEET sugar transporter family.</text>
</comment>
<evidence type="ECO:0000250" key="1"/>
<evidence type="ECO:0000255" key="2"/>
<evidence type="ECO:0000269" key="3">
    <source>
    </source>
</evidence>
<evidence type="ECO:0000269" key="4">
    <source>
    </source>
</evidence>
<evidence type="ECO:0000269" key="5">
    <source>
    </source>
</evidence>
<evidence type="ECO:0000269" key="6">
    <source>
    </source>
</evidence>
<evidence type="ECO:0000303" key="7">
    <source>
    </source>
</evidence>
<evidence type="ECO:0000303" key="8">
    <source>
    </source>
</evidence>
<evidence type="ECO:0000303" key="9">
    <source ref="1"/>
</evidence>
<evidence type="ECO:0000305" key="10"/>